<name>PA2B1_NAJNG</name>
<proteinExistence type="evidence at protein level"/>
<organism>
    <name type="scientific">Naja nigricollis</name>
    <name type="common">Black-necked spitting cobra</name>
    <dbReference type="NCBI Taxonomy" id="8654"/>
    <lineage>
        <taxon>Eukaryota</taxon>
        <taxon>Metazoa</taxon>
        <taxon>Chordata</taxon>
        <taxon>Craniata</taxon>
        <taxon>Vertebrata</taxon>
        <taxon>Euteleostomi</taxon>
        <taxon>Lepidosauria</taxon>
        <taxon>Squamata</taxon>
        <taxon>Bifurcata</taxon>
        <taxon>Unidentata</taxon>
        <taxon>Episquamata</taxon>
        <taxon>Toxicofera</taxon>
        <taxon>Serpentes</taxon>
        <taxon>Colubroidea</taxon>
        <taxon>Elapidae</taxon>
        <taxon>Elapinae</taxon>
        <taxon>Naja</taxon>
    </lineage>
</organism>
<evidence type="ECO:0000250" key="1"/>
<evidence type="ECO:0000269" key="2">
    <source>
    </source>
</evidence>
<evidence type="ECO:0000269" key="3">
    <source>
    </source>
</evidence>
<evidence type="ECO:0000269" key="4">
    <source>
    </source>
</evidence>
<evidence type="ECO:0000305" key="5"/>
<reference key="1">
    <citation type="journal article" date="1980" name="J. Biol. Chem.">
        <title>Isolation of anticoagulant proteins from cobra venom (Naja nigricollis). Identity with phospholipases A2.</title>
        <authorList>
            <person name="Evans H.J."/>
            <person name="Franson R."/>
            <person name="Qureshi G.D."/>
            <person name="Moo-Penn W.F."/>
        </authorList>
    </citation>
    <scope>PROTEIN SEQUENCE</scope>
    <source>
        <tissue>Venom</tissue>
    </source>
</reference>
<reference key="2">
    <citation type="journal article" date="1989" name="Thromb. Res.">
        <title>The inhibition of clotting complexes of the extrinsic coagulation cascade by the phospholipase A2 isoenzymes from Naja nigricollis venom.</title>
        <authorList>
            <person name="Stefansson S."/>
            <person name="Kini R.M."/>
            <person name="Evans H.J."/>
        </authorList>
    </citation>
    <scope>FUNCTION</scope>
</reference>
<reference key="3">
    <citation type="journal article" date="1990" name="Biochemistry">
        <title>The basic phospholipase A2 from Naja nigricollis venom inhibits the prothrombinase complex by a novel nonenzymatic mechanism.</title>
        <authorList>
            <person name="Stefansson S."/>
            <person name="Kini R.M."/>
            <person name="Evans H.J."/>
        </authorList>
    </citation>
    <scope>FUNCTION</scope>
</reference>
<reference key="4">
    <citation type="journal article" date="1995" name="Toxicon">
        <title>The role of enzymatic activity in inhibition of the extrinsic tenase complex by phospholipase A2 isoenzymes from Naja nigricollis venom.</title>
        <authorList>
            <person name="Kini R.M."/>
            <person name="Evans H.J."/>
        </authorList>
    </citation>
    <scope>FUNCTION</scope>
</reference>
<reference key="5">
    <citation type="journal article" date="2005" name="Toxicon">
        <title>Structure-function relationships and mechanism of anticoagulant phospholipase A2 enzymes from snake venoms.</title>
        <authorList>
            <person name="Kini R.M."/>
        </authorList>
    </citation>
    <scope>REVIEW</scope>
</reference>
<feature type="chain" id="PRO_0000420886" description="Basic phospholipase A2 CM-I">
    <location>
        <begin position="1"/>
        <end position="30" status="greater than"/>
    </location>
</feature>
<feature type="disulfide bond" evidence="1">
    <location>
        <begin position="11"/>
        <end status="unknown"/>
    </location>
</feature>
<feature type="disulfide bond" evidence="1">
    <location>
        <begin position="26"/>
        <end status="unknown"/>
    </location>
</feature>
<feature type="disulfide bond" evidence="1">
    <location>
        <begin position="28"/>
        <end status="unknown"/>
    </location>
</feature>
<feature type="non-terminal residue">
    <location>
        <position position="30"/>
    </location>
</feature>
<comment type="function">
    <text evidence="2 3 4">Snake venom phospholipase A2 (PLA2) that shows weak anticoagulant activity. Is more catalytically active than the strong anticoagulant protein CM-IV found in this venom. Acts by inhibiting the complex composed of tissue factor (F3) and coagulation factor VIIa (F7) (TF-VIIa complex) by only enzymatic mechanism (PubMed:8866616). PLA2 catalyzes the calcium-dependent hydrolysis of the 2-acyl groups in 3-sn-phosphoglycerides.</text>
</comment>
<comment type="catalytic activity">
    <reaction>
        <text>a 1,2-diacyl-sn-glycero-3-phosphocholine + H2O = a 1-acyl-sn-glycero-3-phosphocholine + a fatty acid + H(+)</text>
        <dbReference type="Rhea" id="RHEA:15801"/>
        <dbReference type="ChEBI" id="CHEBI:15377"/>
        <dbReference type="ChEBI" id="CHEBI:15378"/>
        <dbReference type="ChEBI" id="CHEBI:28868"/>
        <dbReference type="ChEBI" id="CHEBI:57643"/>
        <dbReference type="ChEBI" id="CHEBI:58168"/>
        <dbReference type="EC" id="3.1.1.4"/>
    </reaction>
</comment>
<comment type="cofactor">
    <cofactor evidence="1">
        <name>Ca(2+)</name>
        <dbReference type="ChEBI" id="CHEBI:29108"/>
    </cofactor>
    <text evidence="1">Binds 1 Ca(2+) ion.</text>
</comment>
<comment type="subcellular location">
    <subcellularLocation>
        <location>Secreted</location>
    </subcellularLocation>
</comment>
<comment type="tissue specificity">
    <text>Expressed by the venom gland.</text>
</comment>
<comment type="similarity">
    <text evidence="5">Belongs to the phospholipase A2 family. Group I subfamily.</text>
</comment>
<sequence>NLYQFKNMIHCTVPSRPWWHFADYGCYCGR</sequence>
<dbReference type="EC" id="3.1.1.4"/>
<dbReference type="SMR" id="P0DKU3"/>
<dbReference type="GO" id="GO:0005576">
    <property type="term" value="C:extracellular region"/>
    <property type="evidence" value="ECO:0007669"/>
    <property type="project" value="UniProtKB-SubCell"/>
</dbReference>
<dbReference type="GO" id="GO:0005509">
    <property type="term" value="F:calcium ion binding"/>
    <property type="evidence" value="ECO:0007669"/>
    <property type="project" value="InterPro"/>
</dbReference>
<dbReference type="GO" id="GO:0004623">
    <property type="term" value="F:phospholipase A2 activity"/>
    <property type="evidence" value="ECO:0007669"/>
    <property type="project" value="UniProtKB-EC"/>
</dbReference>
<dbReference type="GO" id="GO:0090729">
    <property type="term" value="F:toxin activity"/>
    <property type="evidence" value="ECO:0007669"/>
    <property type="project" value="UniProtKB-KW"/>
</dbReference>
<dbReference type="GO" id="GO:0050482">
    <property type="term" value="P:arachidonate secretion"/>
    <property type="evidence" value="ECO:0007669"/>
    <property type="project" value="InterPro"/>
</dbReference>
<dbReference type="GO" id="GO:0016042">
    <property type="term" value="P:lipid catabolic process"/>
    <property type="evidence" value="ECO:0007669"/>
    <property type="project" value="UniProtKB-KW"/>
</dbReference>
<dbReference type="GO" id="GO:0006644">
    <property type="term" value="P:phospholipid metabolic process"/>
    <property type="evidence" value="ECO:0007669"/>
    <property type="project" value="InterPro"/>
</dbReference>
<dbReference type="Gene3D" id="1.20.90.10">
    <property type="entry name" value="Phospholipase A2 domain"/>
    <property type="match status" value="1"/>
</dbReference>
<dbReference type="InterPro" id="IPR001211">
    <property type="entry name" value="PLipase_A2"/>
</dbReference>
<dbReference type="InterPro" id="IPR036444">
    <property type="entry name" value="PLipase_A2_dom_sf"/>
</dbReference>
<dbReference type="PRINTS" id="PR00389">
    <property type="entry name" value="PHPHLIPASEA2"/>
</dbReference>
<dbReference type="SUPFAM" id="SSF48619">
    <property type="entry name" value="Phospholipase A2, PLA2"/>
    <property type="match status" value="1"/>
</dbReference>
<accession>P0DKU3</accession>
<keyword id="KW-1203">Blood coagulation cascade inhibiting toxin</keyword>
<keyword id="KW-0106">Calcium</keyword>
<keyword id="KW-0903">Direct protein sequencing</keyword>
<keyword id="KW-1015">Disulfide bond</keyword>
<keyword id="KW-1199">Hemostasis impairing toxin</keyword>
<keyword id="KW-0378">Hydrolase</keyword>
<keyword id="KW-0442">Lipid degradation</keyword>
<keyword id="KW-0443">Lipid metabolism</keyword>
<keyword id="KW-0479">Metal-binding</keyword>
<keyword id="KW-0964">Secreted</keyword>
<keyword id="KW-0800">Toxin</keyword>
<protein>
    <recommendedName>
        <fullName>Basic phospholipase A2 CM-I</fullName>
        <shortName>svPLA2</shortName>
        <ecNumber>3.1.1.4</ecNumber>
    </recommendedName>
    <alternativeName>
        <fullName>Phosphatidylcholine 2-acylhydrolase</fullName>
    </alternativeName>
    <alternativeName>
        <fullName>Phospholipase A2 isozyme I</fullName>
    </alternativeName>
</protein>